<name>ATPB_SYNAS</name>
<protein>
    <recommendedName>
        <fullName evidence="1">ATP synthase subunit beta</fullName>
        <ecNumber evidence="1">7.1.2.2</ecNumber>
    </recommendedName>
    <alternativeName>
        <fullName evidence="1">ATP synthase F1 sector subunit beta</fullName>
    </alternativeName>
    <alternativeName>
        <fullName evidence="1">F-ATPase subunit beta</fullName>
    </alternativeName>
</protein>
<accession>Q2LR05</accession>
<dbReference type="EC" id="7.1.2.2" evidence="1"/>
<dbReference type="EMBL" id="CP000252">
    <property type="protein sequence ID" value="ABC76511.1"/>
    <property type="molecule type" value="Genomic_DNA"/>
</dbReference>
<dbReference type="RefSeq" id="WP_011416545.1">
    <property type="nucleotide sequence ID" value="NC_007759.1"/>
</dbReference>
<dbReference type="SMR" id="Q2LR05"/>
<dbReference type="FunCoup" id="Q2LR05">
    <property type="interactions" value="381"/>
</dbReference>
<dbReference type="STRING" id="56780.SYN_00544"/>
<dbReference type="KEGG" id="sat:SYN_00544"/>
<dbReference type="eggNOG" id="COG0055">
    <property type="taxonomic scope" value="Bacteria"/>
</dbReference>
<dbReference type="HOGENOM" id="CLU_022398_0_2_7"/>
<dbReference type="InParanoid" id="Q2LR05"/>
<dbReference type="OrthoDB" id="9801639at2"/>
<dbReference type="Proteomes" id="UP000001933">
    <property type="component" value="Chromosome"/>
</dbReference>
<dbReference type="GO" id="GO:0005886">
    <property type="term" value="C:plasma membrane"/>
    <property type="evidence" value="ECO:0007669"/>
    <property type="project" value="UniProtKB-SubCell"/>
</dbReference>
<dbReference type="GO" id="GO:0045259">
    <property type="term" value="C:proton-transporting ATP synthase complex"/>
    <property type="evidence" value="ECO:0007669"/>
    <property type="project" value="UniProtKB-KW"/>
</dbReference>
<dbReference type="GO" id="GO:0005524">
    <property type="term" value="F:ATP binding"/>
    <property type="evidence" value="ECO:0007669"/>
    <property type="project" value="UniProtKB-UniRule"/>
</dbReference>
<dbReference type="GO" id="GO:0016887">
    <property type="term" value="F:ATP hydrolysis activity"/>
    <property type="evidence" value="ECO:0007669"/>
    <property type="project" value="InterPro"/>
</dbReference>
<dbReference type="GO" id="GO:0046933">
    <property type="term" value="F:proton-transporting ATP synthase activity, rotational mechanism"/>
    <property type="evidence" value="ECO:0007669"/>
    <property type="project" value="UniProtKB-UniRule"/>
</dbReference>
<dbReference type="CDD" id="cd18110">
    <property type="entry name" value="ATP-synt_F1_beta_C"/>
    <property type="match status" value="1"/>
</dbReference>
<dbReference type="CDD" id="cd18115">
    <property type="entry name" value="ATP-synt_F1_beta_N"/>
    <property type="match status" value="1"/>
</dbReference>
<dbReference type="CDD" id="cd01133">
    <property type="entry name" value="F1-ATPase_beta_CD"/>
    <property type="match status" value="1"/>
</dbReference>
<dbReference type="FunFam" id="1.10.1140.10:FF:000001">
    <property type="entry name" value="ATP synthase subunit beta"/>
    <property type="match status" value="1"/>
</dbReference>
<dbReference type="FunFam" id="2.40.10.170:FF:000005">
    <property type="entry name" value="ATP synthase subunit beta"/>
    <property type="match status" value="1"/>
</dbReference>
<dbReference type="FunFam" id="3.40.50.300:FF:000026">
    <property type="entry name" value="ATP synthase subunit beta"/>
    <property type="match status" value="1"/>
</dbReference>
<dbReference type="Gene3D" id="2.40.10.170">
    <property type="match status" value="1"/>
</dbReference>
<dbReference type="Gene3D" id="1.10.1140.10">
    <property type="entry name" value="Bovine Mitochondrial F1-atpase, Atp Synthase Beta Chain, Chain D, domain 3"/>
    <property type="match status" value="1"/>
</dbReference>
<dbReference type="Gene3D" id="3.40.50.300">
    <property type="entry name" value="P-loop containing nucleotide triphosphate hydrolases"/>
    <property type="match status" value="1"/>
</dbReference>
<dbReference type="HAMAP" id="MF_01347">
    <property type="entry name" value="ATP_synth_beta_bact"/>
    <property type="match status" value="1"/>
</dbReference>
<dbReference type="InterPro" id="IPR003593">
    <property type="entry name" value="AAA+_ATPase"/>
</dbReference>
<dbReference type="InterPro" id="IPR055190">
    <property type="entry name" value="ATP-synt_VA_C"/>
</dbReference>
<dbReference type="InterPro" id="IPR005722">
    <property type="entry name" value="ATP_synth_F1_bsu"/>
</dbReference>
<dbReference type="InterPro" id="IPR020003">
    <property type="entry name" value="ATPase_a/bsu_AS"/>
</dbReference>
<dbReference type="InterPro" id="IPR050053">
    <property type="entry name" value="ATPase_alpha/beta_chains"/>
</dbReference>
<dbReference type="InterPro" id="IPR004100">
    <property type="entry name" value="ATPase_F1/V1/A1_a/bsu_N"/>
</dbReference>
<dbReference type="InterPro" id="IPR036121">
    <property type="entry name" value="ATPase_F1/V1/A1_a/bsu_N_sf"/>
</dbReference>
<dbReference type="InterPro" id="IPR000194">
    <property type="entry name" value="ATPase_F1/V1/A1_a/bsu_nucl-bd"/>
</dbReference>
<dbReference type="InterPro" id="IPR024034">
    <property type="entry name" value="ATPase_F1/V1_b/a_C"/>
</dbReference>
<dbReference type="InterPro" id="IPR027417">
    <property type="entry name" value="P-loop_NTPase"/>
</dbReference>
<dbReference type="NCBIfam" id="TIGR01039">
    <property type="entry name" value="atpD"/>
    <property type="match status" value="1"/>
</dbReference>
<dbReference type="PANTHER" id="PTHR15184">
    <property type="entry name" value="ATP SYNTHASE"/>
    <property type="match status" value="1"/>
</dbReference>
<dbReference type="PANTHER" id="PTHR15184:SF71">
    <property type="entry name" value="ATP SYNTHASE SUBUNIT BETA, MITOCHONDRIAL"/>
    <property type="match status" value="1"/>
</dbReference>
<dbReference type="Pfam" id="PF00006">
    <property type="entry name" value="ATP-synt_ab"/>
    <property type="match status" value="1"/>
</dbReference>
<dbReference type="Pfam" id="PF02874">
    <property type="entry name" value="ATP-synt_ab_N"/>
    <property type="match status" value="1"/>
</dbReference>
<dbReference type="Pfam" id="PF22919">
    <property type="entry name" value="ATP-synt_VA_C"/>
    <property type="match status" value="1"/>
</dbReference>
<dbReference type="PIRSF" id="PIRSF039072">
    <property type="entry name" value="ATPase_subunit_beta"/>
    <property type="match status" value="1"/>
</dbReference>
<dbReference type="SMART" id="SM00382">
    <property type="entry name" value="AAA"/>
    <property type="match status" value="1"/>
</dbReference>
<dbReference type="SUPFAM" id="SSF47917">
    <property type="entry name" value="C-terminal domain of alpha and beta subunits of F1 ATP synthase"/>
    <property type="match status" value="1"/>
</dbReference>
<dbReference type="SUPFAM" id="SSF50615">
    <property type="entry name" value="N-terminal domain of alpha and beta subunits of F1 ATP synthase"/>
    <property type="match status" value="1"/>
</dbReference>
<dbReference type="SUPFAM" id="SSF52540">
    <property type="entry name" value="P-loop containing nucleoside triphosphate hydrolases"/>
    <property type="match status" value="1"/>
</dbReference>
<dbReference type="PROSITE" id="PS00152">
    <property type="entry name" value="ATPASE_ALPHA_BETA"/>
    <property type="match status" value="1"/>
</dbReference>
<sequence>MNIGRIVQVIGPVIDVVFEEGQLPAILNAITITNPVINDEEDNLIVEVAQHLGDNNVRCIAMDVTDGLVRGMPAKDTGAPITVPVGKECLGRILNVVGKPVDGLGPIEAKNTMPIHREAPSFLEQDTSVHVLETGVKVIDLLVPFPRGGKMGLFGGAGCGKTVVMMEMIHNIAMHHGGISVFAGVGERTREGNDLYREMLESGVIKQAALIYGQMTEPPGARARVSLTALAAAEYFRDVEGQDVLLFVDNIFRFTQAGSEVSALLGRMPSAVGYQPTLATDLGELQERITSTDKGSITAVQCVYVPADDLTDPAPATTFAHLDGTVVLSRPIAELGIYPAVDPLDSTSRILDPIVLGEEHYKVARAVQVTLQKYKDLQDIIAILGMDELSEEDKLTVNRARKIQRFLSQPFFVAAQFTGVDGKFVSVPDTVRGFKEILEGKYDDLPEQAFYMVGGIEEAVEKAKKYQEQ</sequence>
<gene>
    <name evidence="1" type="primary">atpD</name>
    <name type="ordered locus">SYNAS_06320</name>
    <name type="ORF">SYN_00544</name>
</gene>
<keyword id="KW-0066">ATP synthesis</keyword>
<keyword id="KW-0067">ATP-binding</keyword>
<keyword id="KW-0997">Cell inner membrane</keyword>
<keyword id="KW-1003">Cell membrane</keyword>
<keyword id="KW-0139">CF(1)</keyword>
<keyword id="KW-0375">Hydrogen ion transport</keyword>
<keyword id="KW-0406">Ion transport</keyword>
<keyword id="KW-0472">Membrane</keyword>
<keyword id="KW-0547">Nucleotide-binding</keyword>
<keyword id="KW-1185">Reference proteome</keyword>
<keyword id="KW-1278">Translocase</keyword>
<keyword id="KW-0813">Transport</keyword>
<feature type="chain" id="PRO_0000254411" description="ATP synthase subunit beta">
    <location>
        <begin position="1"/>
        <end position="469"/>
    </location>
</feature>
<feature type="binding site" evidence="1">
    <location>
        <begin position="155"/>
        <end position="162"/>
    </location>
    <ligand>
        <name>ATP</name>
        <dbReference type="ChEBI" id="CHEBI:30616"/>
    </ligand>
</feature>
<proteinExistence type="inferred from homology"/>
<evidence type="ECO:0000255" key="1">
    <source>
        <dbReference type="HAMAP-Rule" id="MF_01347"/>
    </source>
</evidence>
<reference key="1">
    <citation type="journal article" date="2007" name="Proc. Natl. Acad. Sci. U.S.A.">
        <title>The genome of Syntrophus aciditrophicus: life at the thermodynamic limit of microbial growth.</title>
        <authorList>
            <person name="McInerney M.J."/>
            <person name="Rohlin L."/>
            <person name="Mouttaki H."/>
            <person name="Kim U."/>
            <person name="Krupp R.S."/>
            <person name="Rios-Hernandez L."/>
            <person name="Sieber J."/>
            <person name="Struchtemeyer C.G."/>
            <person name="Bhattacharyya A."/>
            <person name="Campbell J.W."/>
            <person name="Gunsalus R.P."/>
        </authorList>
    </citation>
    <scope>NUCLEOTIDE SEQUENCE [LARGE SCALE GENOMIC DNA]</scope>
    <source>
        <strain>SB</strain>
    </source>
</reference>
<comment type="function">
    <text evidence="1">Produces ATP from ADP in the presence of a proton gradient across the membrane. The catalytic sites are hosted primarily by the beta subunits.</text>
</comment>
<comment type="catalytic activity">
    <reaction evidence="1">
        <text>ATP + H2O + 4 H(+)(in) = ADP + phosphate + 5 H(+)(out)</text>
        <dbReference type="Rhea" id="RHEA:57720"/>
        <dbReference type="ChEBI" id="CHEBI:15377"/>
        <dbReference type="ChEBI" id="CHEBI:15378"/>
        <dbReference type="ChEBI" id="CHEBI:30616"/>
        <dbReference type="ChEBI" id="CHEBI:43474"/>
        <dbReference type="ChEBI" id="CHEBI:456216"/>
        <dbReference type="EC" id="7.1.2.2"/>
    </reaction>
</comment>
<comment type="subunit">
    <text evidence="1">F-type ATPases have 2 components, CF(1) - the catalytic core - and CF(0) - the membrane proton channel. CF(1) has five subunits: alpha(3), beta(3), gamma(1), delta(1), epsilon(1). CF(0) has three main subunits: a(1), b(2) and c(9-12). The alpha and beta chains form an alternating ring which encloses part of the gamma chain. CF(1) is attached to CF(0) by a central stalk formed by the gamma and epsilon chains, while a peripheral stalk is formed by the delta and b chains.</text>
</comment>
<comment type="subcellular location">
    <subcellularLocation>
        <location evidence="1">Cell inner membrane</location>
        <topology evidence="1">Peripheral membrane protein</topology>
    </subcellularLocation>
</comment>
<comment type="similarity">
    <text evidence="1">Belongs to the ATPase alpha/beta chains family.</text>
</comment>
<organism>
    <name type="scientific">Syntrophus aciditrophicus (strain SB)</name>
    <dbReference type="NCBI Taxonomy" id="56780"/>
    <lineage>
        <taxon>Bacteria</taxon>
        <taxon>Pseudomonadati</taxon>
        <taxon>Thermodesulfobacteriota</taxon>
        <taxon>Syntrophia</taxon>
        <taxon>Syntrophales</taxon>
        <taxon>Syntrophaceae</taxon>
        <taxon>Syntrophus</taxon>
    </lineage>
</organism>